<feature type="chain" id="PRO_0000056208" description="E3 ubiquitin-protein ligase TRIM9">
    <location>
        <begin position="1"/>
        <end position="710"/>
    </location>
</feature>
<feature type="domain" description="COS" evidence="8">
    <location>
        <begin position="374"/>
        <end position="432"/>
    </location>
</feature>
<feature type="domain" description="Fibronectin type-III" evidence="6">
    <location>
        <begin position="440"/>
        <end position="535"/>
    </location>
</feature>
<feature type="domain" description="B30.2/SPRY" evidence="7">
    <location>
        <begin position="533"/>
        <end position="702"/>
    </location>
</feature>
<feature type="zinc finger region" description="RING-type" evidence="5">
    <location>
        <begin position="10"/>
        <end position="50"/>
    </location>
</feature>
<feature type="zinc finger region" description="B box-type 1" evidence="4">
    <location>
        <begin position="163"/>
        <end position="212"/>
    </location>
</feature>
<feature type="zinc finger region" description="B box-type 2" evidence="4">
    <location>
        <begin position="224"/>
        <end position="266"/>
    </location>
</feature>
<feature type="coiled-coil region" evidence="3">
    <location>
        <begin position="273"/>
        <end position="340"/>
    </location>
</feature>
<feature type="binding site" evidence="4">
    <location>
        <position position="168"/>
    </location>
    <ligand>
        <name>Zn(2+)</name>
        <dbReference type="ChEBI" id="CHEBI:29105"/>
        <label>1</label>
    </ligand>
</feature>
<feature type="binding site" evidence="4">
    <location>
        <position position="171"/>
    </location>
    <ligand>
        <name>Zn(2+)</name>
        <dbReference type="ChEBI" id="CHEBI:29105"/>
        <label>1</label>
    </ligand>
</feature>
<feature type="binding site" evidence="4">
    <location>
        <position position="193"/>
    </location>
    <ligand>
        <name>Zn(2+)</name>
        <dbReference type="ChEBI" id="CHEBI:29105"/>
        <label>1</label>
    </ligand>
</feature>
<feature type="binding site" evidence="4">
    <location>
        <position position="198"/>
    </location>
    <ligand>
        <name>Zn(2+)</name>
        <dbReference type="ChEBI" id="CHEBI:29105"/>
        <label>1</label>
    </ligand>
</feature>
<feature type="binding site" evidence="4">
    <location>
        <position position="229"/>
    </location>
    <ligand>
        <name>Zn(2+)</name>
        <dbReference type="ChEBI" id="CHEBI:29105"/>
        <label>2</label>
    </ligand>
</feature>
<feature type="binding site" evidence="4">
    <location>
        <position position="232"/>
    </location>
    <ligand>
        <name>Zn(2+)</name>
        <dbReference type="ChEBI" id="CHEBI:29105"/>
        <label>2</label>
    </ligand>
</feature>
<feature type="binding site" evidence="4">
    <location>
        <position position="252"/>
    </location>
    <ligand>
        <name>Zn(2+)</name>
        <dbReference type="ChEBI" id="CHEBI:29105"/>
        <label>2</label>
    </ligand>
</feature>
<feature type="binding site" evidence="4">
    <location>
        <position position="258"/>
    </location>
    <ligand>
        <name>Zn(2+)</name>
        <dbReference type="ChEBI" id="CHEBI:29105"/>
        <label>2</label>
    </ligand>
</feature>
<feature type="modified residue" description="Phosphothreonine" evidence="1">
    <location>
        <position position="41"/>
    </location>
</feature>
<feature type="modified residue" description="Phosphoserine" evidence="1">
    <location>
        <position position="44"/>
    </location>
</feature>
<feature type="modified residue" description="Phosphoserine" evidence="1">
    <location>
        <position position="46"/>
    </location>
</feature>
<feature type="modified residue" description="Phosphoserine" evidence="1">
    <location>
        <position position="49"/>
    </location>
</feature>
<feature type="splice variant" id="VSP_007922" description="In isoform 4." evidence="13">
    <location>
        <begin position="436"/>
        <end position="439"/>
    </location>
</feature>
<feature type="splice variant" id="VSP_007923" description="In isoform 4." evidence="13">
    <original>E</original>
    <variation>EDTDSEEQTLPFPVPSERLPLRRMSPFSSTLNLQPSFPGRSYFDFRSSPHQLSLHSSLQSLNAPGCNFETQSAPYSQLVDIKKLLA</variation>
    <location>
        <position position="534"/>
    </location>
</feature>
<feature type="splice variant" id="VSP_007925" description="In isoform 5." evidence="14">
    <original>VAWFAFDPGSAHSDII</original>
    <variation>GKALQQYPSERELRGI</variation>
    <location>
        <begin position="535"/>
        <end position="550"/>
    </location>
</feature>
<feature type="splice variant" id="VSP_007926" description="In isoform 5." evidence="14">
    <location>
        <begin position="551"/>
        <end position="710"/>
    </location>
</feature>
<feature type="splice variant" id="VSP_007924" description="In isoform 4." evidence="13">
    <original>TLHTGLPVPDFYSSRASIA</original>
    <variation>STLPLRLNSCCWLPVQRLPRAVQSNRREGS</variation>
    <location>
        <begin position="692"/>
        <end position="710"/>
    </location>
</feature>
<feature type="sequence variant" id="VAR_016202" description="In dbSNP:rs2275462." evidence="9 10 12">
    <original>L</original>
    <variation>F</variation>
    <location>
        <position position="653"/>
    </location>
</feature>
<feature type="sequence conflict" description="In Ref. 2; BAB70913." evidence="15" ref="2">
    <original>A</original>
    <variation>V</variation>
    <location>
        <position position="314"/>
    </location>
</feature>
<feature type="sequence conflict" description="In Ref. 2; BAB70913." evidence="15" ref="2">
    <original>Q</original>
    <variation>R</variation>
    <location>
        <position position="384"/>
    </location>
</feature>
<feature type="strand" evidence="16">
    <location>
        <begin position="454"/>
        <end position="460"/>
    </location>
</feature>
<feature type="strand" evidence="16">
    <location>
        <begin position="473"/>
        <end position="479"/>
    </location>
</feature>
<feature type="strand" evidence="16">
    <location>
        <begin position="482"/>
        <end position="485"/>
    </location>
</feature>
<feature type="strand" evidence="16">
    <location>
        <begin position="488"/>
        <end position="494"/>
    </location>
</feature>
<feature type="strand" evidence="16">
    <location>
        <begin position="498"/>
        <end position="501"/>
    </location>
</feature>
<feature type="strand" evidence="16">
    <location>
        <begin position="505"/>
        <end position="507"/>
    </location>
</feature>
<feature type="strand" evidence="16">
    <location>
        <begin position="510"/>
        <end position="516"/>
    </location>
</feature>
<feature type="helix" evidence="17">
    <location>
        <begin position="542"/>
        <end position="544"/>
    </location>
</feature>
<feature type="strand" evidence="17">
    <location>
        <begin position="549"/>
        <end position="552"/>
    </location>
</feature>
<feature type="turn" evidence="17">
    <location>
        <begin position="553"/>
        <end position="556"/>
    </location>
</feature>
<feature type="strand" evidence="17">
    <location>
        <begin position="557"/>
        <end position="564"/>
    </location>
</feature>
<feature type="strand" evidence="17">
    <location>
        <begin position="566"/>
        <end position="571"/>
    </location>
</feature>
<feature type="strand" evidence="17">
    <location>
        <begin position="576"/>
        <end position="588"/>
    </location>
</feature>
<feature type="strand" evidence="17">
    <location>
        <begin position="595"/>
        <end position="599"/>
    </location>
</feature>
<feature type="strand" evidence="17">
    <location>
        <begin position="605"/>
        <end position="607"/>
    </location>
</feature>
<feature type="strand" evidence="17">
    <location>
        <begin position="615"/>
        <end position="620"/>
    </location>
</feature>
<feature type="strand" evidence="17">
    <location>
        <begin position="622"/>
        <end position="629"/>
    </location>
</feature>
<feature type="strand" evidence="17">
    <location>
        <begin position="632"/>
        <end position="638"/>
    </location>
</feature>
<feature type="strand" evidence="17">
    <location>
        <begin position="646"/>
        <end position="652"/>
    </location>
</feature>
<feature type="turn" evidence="17">
    <location>
        <begin position="653"/>
        <end position="656"/>
    </location>
</feature>
<feature type="strand" evidence="17">
    <location>
        <begin position="657"/>
        <end position="662"/>
    </location>
</feature>
<feature type="strand" evidence="17">
    <location>
        <begin position="679"/>
        <end position="685"/>
    </location>
</feature>
<feature type="strand" evidence="17">
    <location>
        <begin position="689"/>
        <end position="694"/>
    </location>
</feature>
<name>TRIM9_HUMAN</name>
<sequence length="710" mass="79177">MEEMEEELKCPVCGSFYREPIILPCSHNLCQACARNILVQTPESESPQSHRAAGSGVSDYDYLDLDKMSLYSEADSGYGSYGGFASAPTTPCQKSPNGVRVFPPAMPPPATHLSPALAPVPRNSCITCPQCHRSLILDDRGLRGFPKNRVLEGVIDRYQQSKAAALKCQLCEKAPKEATVMCEQCDVFYCDPCRLRCHPPRGPLAKHRLVPPAQGRVSRRLSPRKVSTCTDHELENHSMYCVQCKMPVCYQCLEEGKHSSHEVKALGAMWKLHKSQLSQALNGLSDRAKEAKEFLVQLRNMVQQIQENSVEFEACLVAQCDALIDALNRRKAQLLARVNKEHEHKLKVVRDQISHCTVKLRQTTGLMEYCLEVIKENDPSGFLQISDALIRRVHLTEDQWGKGTLTPRMTTDFDLSLDNSPLLQSIHQLDFVQVKASSPVPATPILQLEECCTHNNSATLSWKQPPLSTVPADGYILELDDGNGGQFREVYVGKETMCTVDGLHFNSTYNARVKAFNKTGVSPYSKTLVLQTSEVAWFAFDPGSAHSDIILSNDNLTVTCSSYDDRVVLGKTGFSKGIHYWELTVDRYDNHPDPAFGVARMDVMKDVMLGKDDKAWAMYVDNNRSWFMHNNSHTNRTEGGITKGATIGVLLDLNRKNLTFFINDEQQGPIAFDNVEGLFFPAVSLNRNVQVTLHTGLPVPDFYSSRASIA</sequence>
<dbReference type="EC" id="2.3.2.27" evidence="11"/>
<dbReference type="EMBL" id="AF220036">
    <property type="protein sequence ID" value="AAG53490.1"/>
    <property type="status" value="ALT_FRAME"/>
    <property type="molecule type" value="mRNA"/>
</dbReference>
<dbReference type="EMBL" id="AF220037">
    <property type="protein sequence ID" value="AAG53491.1"/>
    <property type="molecule type" value="mRNA"/>
</dbReference>
<dbReference type="EMBL" id="AF220038">
    <property type="protein sequence ID" value="AAG53492.1"/>
    <property type="status" value="ALT_FRAME"/>
    <property type="molecule type" value="mRNA"/>
</dbReference>
<dbReference type="EMBL" id="D87458">
    <property type="protein sequence ID" value="BAA13398.2"/>
    <property type="status" value="ALT_SEQ"/>
    <property type="molecule type" value="mRNA"/>
</dbReference>
<dbReference type="EMBL" id="AK055388">
    <property type="protein sequence ID" value="BAB70913.1"/>
    <property type="molecule type" value="mRNA"/>
</dbReference>
<dbReference type="EMBL" id="CH471078">
    <property type="protein sequence ID" value="EAW65680.1"/>
    <property type="molecule type" value="Genomic_DNA"/>
</dbReference>
<dbReference type="EMBL" id="CH471078">
    <property type="protein sequence ID" value="EAW65681.1"/>
    <property type="molecule type" value="Genomic_DNA"/>
</dbReference>
<dbReference type="EMBL" id="CH471078">
    <property type="protein sequence ID" value="EAW65682.1"/>
    <property type="molecule type" value="Genomic_DNA"/>
</dbReference>
<dbReference type="EMBL" id="CH471078">
    <property type="protein sequence ID" value="EAW65684.1"/>
    <property type="molecule type" value="Genomic_DNA"/>
</dbReference>
<dbReference type="EMBL" id="BC013414">
    <property type="protein sequence ID" value="AAH13414.1"/>
    <property type="molecule type" value="mRNA"/>
</dbReference>
<dbReference type="EMBL" id="BC063872">
    <property type="protein sequence ID" value="AAH63872.1"/>
    <property type="molecule type" value="mRNA"/>
</dbReference>
<dbReference type="CCDS" id="CCDS45105.1">
    <molecule id="Q9C026-5"/>
</dbReference>
<dbReference type="CCDS" id="CCDS9703.1">
    <molecule id="Q9C026-1"/>
</dbReference>
<dbReference type="RefSeq" id="NP_055978.4">
    <molecule id="Q9C026-1"/>
    <property type="nucleotide sequence ID" value="NM_015163.5"/>
</dbReference>
<dbReference type="RefSeq" id="NP_443210.1">
    <molecule id="Q9C026-5"/>
    <property type="nucleotide sequence ID" value="NM_052978.5"/>
</dbReference>
<dbReference type="RefSeq" id="XP_011534691.1">
    <molecule id="Q9C026-4"/>
    <property type="nucleotide sequence ID" value="XM_011536389.3"/>
</dbReference>
<dbReference type="RefSeq" id="XP_016876434.1">
    <property type="nucleotide sequence ID" value="XM_017020945.1"/>
</dbReference>
<dbReference type="RefSeq" id="XP_054231290.1">
    <molecule id="Q9C026-4"/>
    <property type="nucleotide sequence ID" value="XM_054375315.1"/>
</dbReference>
<dbReference type="RefSeq" id="XP_054231294.1">
    <molecule id="Q9C026-1"/>
    <property type="nucleotide sequence ID" value="XM_054375319.1"/>
</dbReference>
<dbReference type="RefSeq" id="XP_054231300.1">
    <molecule id="Q9C026-5"/>
    <property type="nucleotide sequence ID" value="XM_054375325.1"/>
</dbReference>
<dbReference type="PDB" id="2DB8">
    <property type="method" value="NMR"/>
    <property type="chains" value="A=439-534"/>
</dbReference>
<dbReference type="PDB" id="7B2S">
    <property type="method" value="X-ray"/>
    <property type="resolution" value="1.50 A"/>
    <property type="chains" value="A=535-710"/>
</dbReference>
<dbReference type="PDBsum" id="2DB8"/>
<dbReference type="PDBsum" id="7B2S"/>
<dbReference type="BMRB" id="Q9C026"/>
<dbReference type="SMR" id="Q9C026"/>
<dbReference type="BioGRID" id="125280">
    <property type="interactions" value="407"/>
</dbReference>
<dbReference type="FunCoup" id="Q9C026">
    <property type="interactions" value="729"/>
</dbReference>
<dbReference type="IntAct" id="Q9C026">
    <property type="interactions" value="65"/>
</dbReference>
<dbReference type="MINT" id="Q9C026"/>
<dbReference type="STRING" id="9606.ENSP00000298355"/>
<dbReference type="iPTMnet" id="Q9C026"/>
<dbReference type="PhosphoSitePlus" id="Q9C026"/>
<dbReference type="BioMuta" id="TRIM9"/>
<dbReference type="DMDM" id="33516964"/>
<dbReference type="REPRODUCTION-2DPAGE" id="Q9C026"/>
<dbReference type="jPOST" id="Q9C026"/>
<dbReference type="MassIVE" id="Q9C026"/>
<dbReference type="PaxDb" id="9606-ENSP00000298355"/>
<dbReference type="PeptideAtlas" id="Q9C026"/>
<dbReference type="ProteomicsDB" id="79943">
    <molecule id="Q9C026-1"/>
</dbReference>
<dbReference type="ProteomicsDB" id="79944">
    <molecule id="Q9C026-4"/>
</dbReference>
<dbReference type="ProteomicsDB" id="79945">
    <molecule id="Q9C026-5"/>
</dbReference>
<dbReference type="Pumba" id="Q9C026"/>
<dbReference type="Antibodypedia" id="10667">
    <property type="antibodies" value="507 antibodies from 25 providers"/>
</dbReference>
<dbReference type="DNASU" id="114088"/>
<dbReference type="Ensembl" id="ENST00000298355.7">
    <molecule id="Q9C026-1"/>
    <property type="protein sequence ID" value="ENSP00000298355.3"/>
    <property type="gene ID" value="ENSG00000100505.14"/>
</dbReference>
<dbReference type="Ensembl" id="ENST00000338969.9">
    <molecule id="Q9C026-4"/>
    <property type="protein sequence ID" value="ENSP00000342970.5"/>
    <property type="gene ID" value="ENSG00000100505.14"/>
</dbReference>
<dbReference type="Ensembl" id="ENST00000360392.4">
    <molecule id="Q9C026-5"/>
    <property type="protein sequence ID" value="ENSP00000353561.4"/>
    <property type="gene ID" value="ENSG00000100505.14"/>
</dbReference>
<dbReference type="GeneID" id="114088"/>
<dbReference type="KEGG" id="hsa:114088"/>
<dbReference type="UCSC" id="uc001wyx.5">
    <molecule id="Q9C026-1"/>
    <property type="organism name" value="human"/>
</dbReference>
<dbReference type="AGR" id="HGNC:16288"/>
<dbReference type="CTD" id="114088"/>
<dbReference type="DisGeNET" id="114088"/>
<dbReference type="GeneCards" id="TRIM9"/>
<dbReference type="HGNC" id="HGNC:16288">
    <property type="gene designation" value="TRIM9"/>
</dbReference>
<dbReference type="HPA" id="ENSG00000100505">
    <property type="expression patterns" value="Tissue enriched (brain)"/>
</dbReference>
<dbReference type="MIM" id="606555">
    <property type="type" value="gene"/>
</dbReference>
<dbReference type="neXtProt" id="NX_Q9C026"/>
<dbReference type="OpenTargets" id="ENSG00000100505"/>
<dbReference type="PharmGKB" id="PA38116"/>
<dbReference type="VEuPathDB" id="HostDB:ENSG00000100505"/>
<dbReference type="eggNOG" id="KOG4367">
    <property type="taxonomic scope" value="Eukaryota"/>
</dbReference>
<dbReference type="GeneTree" id="ENSGT00940000154071"/>
<dbReference type="HOGENOM" id="CLU_013137_19_2_1"/>
<dbReference type="InParanoid" id="Q9C026"/>
<dbReference type="OMA" id="PDTICTI"/>
<dbReference type="OrthoDB" id="295536at2759"/>
<dbReference type="PAN-GO" id="Q9C026">
    <property type="GO annotations" value="1 GO annotation based on evolutionary models"/>
</dbReference>
<dbReference type="PhylomeDB" id="Q9C026"/>
<dbReference type="TreeFam" id="TF315216"/>
<dbReference type="PathwayCommons" id="Q9C026"/>
<dbReference type="Reactome" id="R-HSA-983168">
    <property type="pathway name" value="Antigen processing: Ubiquitination &amp; Proteasome degradation"/>
</dbReference>
<dbReference type="SignaLink" id="Q9C026"/>
<dbReference type="SIGNOR" id="Q9C026"/>
<dbReference type="UniPathway" id="UPA00143"/>
<dbReference type="BioGRID-ORCS" id="114088">
    <property type="hits" value="32 hits in 1186 CRISPR screens"/>
</dbReference>
<dbReference type="ChiTaRS" id="TRIM9">
    <property type="organism name" value="human"/>
</dbReference>
<dbReference type="EvolutionaryTrace" id="Q9C026"/>
<dbReference type="GeneWiki" id="TRIM9"/>
<dbReference type="GenomeRNAi" id="114088"/>
<dbReference type="Pharos" id="Q9C026">
    <property type="development level" value="Tbio"/>
</dbReference>
<dbReference type="PRO" id="PR:Q9C026"/>
<dbReference type="Proteomes" id="UP000005640">
    <property type="component" value="Chromosome 14"/>
</dbReference>
<dbReference type="RNAct" id="Q9C026">
    <property type="molecule type" value="protein"/>
</dbReference>
<dbReference type="Bgee" id="ENSG00000100505">
    <property type="expression patterns" value="Expressed in right hemisphere of cerebellum and 145 other cell types or tissues"/>
</dbReference>
<dbReference type="GO" id="GO:0005737">
    <property type="term" value="C:cytoplasm"/>
    <property type="evidence" value="ECO:0000314"/>
    <property type="project" value="UniProtKB"/>
</dbReference>
<dbReference type="GO" id="GO:0005856">
    <property type="term" value="C:cytoskeleton"/>
    <property type="evidence" value="ECO:0007669"/>
    <property type="project" value="UniProtKB-SubCell"/>
</dbReference>
<dbReference type="GO" id="GO:0030425">
    <property type="term" value="C:dendrite"/>
    <property type="evidence" value="ECO:0000314"/>
    <property type="project" value="UniProtKB"/>
</dbReference>
<dbReference type="GO" id="GO:0008021">
    <property type="term" value="C:synaptic vesicle"/>
    <property type="evidence" value="ECO:0007669"/>
    <property type="project" value="UniProtKB-SubCell"/>
</dbReference>
<dbReference type="GO" id="GO:0019904">
    <property type="term" value="F:protein domain specific binding"/>
    <property type="evidence" value="ECO:0000353"/>
    <property type="project" value="UniProtKB"/>
</dbReference>
<dbReference type="GO" id="GO:0042803">
    <property type="term" value="F:protein homodimerization activity"/>
    <property type="evidence" value="ECO:0000353"/>
    <property type="project" value="UniProtKB"/>
</dbReference>
<dbReference type="GO" id="GO:0061630">
    <property type="term" value="F:ubiquitin protein ligase activity"/>
    <property type="evidence" value="ECO:0000314"/>
    <property type="project" value="UniProtKB"/>
</dbReference>
<dbReference type="GO" id="GO:0008270">
    <property type="term" value="F:zinc ion binding"/>
    <property type="evidence" value="ECO:0007669"/>
    <property type="project" value="UniProtKB-KW"/>
</dbReference>
<dbReference type="GO" id="GO:0043161">
    <property type="term" value="P:proteasome-mediated ubiquitin-dependent protein catabolic process"/>
    <property type="evidence" value="ECO:0000314"/>
    <property type="project" value="UniProtKB"/>
</dbReference>
<dbReference type="GO" id="GO:0016567">
    <property type="term" value="P:protein ubiquitination"/>
    <property type="evidence" value="ECO:0007669"/>
    <property type="project" value="UniProtKB-UniPathway"/>
</dbReference>
<dbReference type="CDD" id="cd19843">
    <property type="entry name" value="Bbox1_TRIM9_C-I"/>
    <property type="match status" value="1"/>
</dbReference>
<dbReference type="CDD" id="cd19826">
    <property type="entry name" value="Bbox2_TRIM9_C-I"/>
    <property type="match status" value="1"/>
</dbReference>
<dbReference type="CDD" id="cd00063">
    <property type="entry name" value="FN3"/>
    <property type="match status" value="1"/>
</dbReference>
<dbReference type="CDD" id="cd16755">
    <property type="entry name" value="RING-HC_TRIM9"/>
    <property type="match status" value="1"/>
</dbReference>
<dbReference type="CDD" id="cd12889">
    <property type="entry name" value="SPRY_PRY_TRIM67_9"/>
    <property type="match status" value="1"/>
</dbReference>
<dbReference type="FunFam" id="2.60.120.920:FF:000009">
    <property type="entry name" value="E3 ubiquitin-protein ligase TRIM9 isoform X1"/>
    <property type="match status" value="1"/>
</dbReference>
<dbReference type="FunFam" id="2.60.40.10:FF:000178">
    <property type="entry name" value="E3 ubiquitin-protein ligase TRIM9 isoform X1"/>
    <property type="match status" value="1"/>
</dbReference>
<dbReference type="FunFam" id="3.30.40.10:FF:000168">
    <property type="entry name" value="E3 ubiquitin-protein ligase TRIM9 isoform X1"/>
    <property type="match status" value="1"/>
</dbReference>
<dbReference type="FunFam" id="4.10.830.40:FF:000001">
    <property type="entry name" value="E3 ubiquitin-protein ligase TRIM9 isoform X1"/>
    <property type="match status" value="1"/>
</dbReference>
<dbReference type="FunFam" id="3.30.160.60:FF:000329">
    <property type="entry name" value="E3 ubiquitin-protein ligase TRIM9 isoform X2"/>
    <property type="match status" value="1"/>
</dbReference>
<dbReference type="FunFam" id="1.20.5.170:FF:000017">
    <property type="entry name" value="Putative E3 ubiquitin-protein ligase TRIM9"/>
    <property type="match status" value="1"/>
</dbReference>
<dbReference type="Gene3D" id="1.20.5.170">
    <property type="match status" value="1"/>
</dbReference>
<dbReference type="Gene3D" id="2.60.120.920">
    <property type="match status" value="1"/>
</dbReference>
<dbReference type="Gene3D" id="4.10.830.40">
    <property type="match status" value="1"/>
</dbReference>
<dbReference type="Gene3D" id="3.30.160.60">
    <property type="entry name" value="Classic Zinc Finger"/>
    <property type="match status" value="1"/>
</dbReference>
<dbReference type="Gene3D" id="2.60.40.10">
    <property type="entry name" value="Immunoglobulins"/>
    <property type="match status" value="1"/>
</dbReference>
<dbReference type="Gene3D" id="3.30.40.10">
    <property type="entry name" value="Zinc/RING finger domain, C3HC4 (zinc finger)"/>
    <property type="match status" value="1"/>
</dbReference>
<dbReference type="InterPro" id="IPR001870">
    <property type="entry name" value="B30.2/SPRY"/>
</dbReference>
<dbReference type="InterPro" id="IPR043136">
    <property type="entry name" value="B30.2/SPRY_sf"/>
</dbReference>
<dbReference type="InterPro" id="IPR003649">
    <property type="entry name" value="Bbox_C"/>
</dbReference>
<dbReference type="InterPro" id="IPR013320">
    <property type="entry name" value="ConA-like_dom_sf"/>
</dbReference>
<dbReference type="InterPro" id="IPR017903">
    <property type="entry name" value="COS_domain"/>
</dbReference>
<dbReference type="InterPro" id="IPR050617">
    <property type="entry name" value="E3_ligase_FN3/SPRY"/>
</dbReference>
<dbReference type="InterPro" id="IPR003961">
    <property type="entry name" value="FN3_dom"/>
</dbReference>
<dbReference type="InterPro" id="IPR036116">
    <property type="entry name" value="FN3_sf"/>
</dbReference>
<dbReference type="InterPro" id="IPR013783">
    <property type="entry name" value="Ig-like_fold"/>
</dbReference>
<dbReference type="InterPro" id="IPR003877">
    <property type="entry name" value="SPRY_dom"/>
</dbReference>
<dbReference type="InterPro" id="IPR049582">
    <property type="entry name" value="TRIM9_Bbox1"/>
</dbReference>
<dbReference type="InterPro" id="IPR000315">
    <property type="entry name" value="Znf_B-box"/>
</dbReference>
<dbReference type="InterPro" id="IPR018957">
    <property type="entry name" value="Znf_C3HC4_RING-type"/>
</dbReference>
<dbReference type="InterPro" id="IPR001841">
    <property type="entry name" value="Znf_RING"/>
</dbReference>
<dbReference type="InterPro" id="IPR013083">
    <property type="entry name" value="Znf_RING/FYVE/PHD"/>
</dbReference>
<dbReference type="InterPro" id="IPR017907">
    <property type="entry name" value="Znf_RING_CS"/>
</dbReference>
<dbReference type="PANTHER" id="PTHR24099">
    <property type="entry name" value="E3 UBIQUITIN-PROTEIN LIGASE TRIM36-RELATED"/>
    <property type="match status" value="1"/>
</dbReference>
<dbReference type="PANTHER" id="PTHR24099:SF13">
    <property type="entry name" value="E3 UBIQUITIN-PROTEIN LIGASE TRIM9"/>
    <property type="match status" value="1"/>
</dbReference>
<dbReference type="Pfam" id="PF22586">
    <property type="entry name" value="ANCHR-like_BBOX"/>
    <property type="match status" value="1"/>
</dbReference>
<dbReference type="Pfam" id="PF00041">
    <property type="entry name" value="fn3"/>
    <property type="match status" value="1"/>
</dbReference>
<dbReference type="Pfam" id="PF00622">
    <property type="entry name" value="SPRY"/>
    <property type="match status" value="1"/>
</dbReference>
<dbReference type="Pfam" id="PF00643">
    <property type="entry name" value="zf-B_box"/>
    <property type="match status" value="1"/>
</dbReference>
<dbReference type="Pfam" id="PF00097">
    <property type="entry name" value="zf-C3HC4"/>
    <property type="match status" value="1"/>
</dbReference>
<dbReference type="SMART" id="SM00502">
    <property type="entry name" value="BBC"/>
    <property type="match status" value="1"/>
</dbReference>
<dbReference type="SMART" id="SM00336">
    <property type="entry name" value="BBOX"/>
    <property type="match status" value="2"/>
</dbReference>
<dbReference type="SMART" id="SM00060">
    <property type="entry name" value="FN3"/>
    <property type="match status" value="1"/>
</dbReference>
<dbReference type="SMART" id="SM00184">
    <property type="entry name" value="RING"/>
    <property type="match status" value="1"/>
</dbReference>
<dbReference type="SMART" id="SM00449">
    <property type="entry name" value="SPRY"/>
    <property type="match status" value="1"/>
</dbReference>
<dbReference type="SUPFAM" id="SSF57845">
    <property type="entry name" value="B-box zinc-binding domain"/>
    <property type="match status" value="1"/>
</dbReference>
<dbReference type="SUPFAM" id="SSF49899">
    <property type="entry name" value="Concanavalin A-like lectins/glucanases"/>
    <property type="match status" value="1"/>
</dbReference>
<dbReference type="SUPFAM" id="SSF49265">
    <property type="entry name" value="Fibronectin type III"/>
    <property type="match status" value="1"/>
</dbReference>
<dbReference type="SUPFAM" id="SSF57850">
    <property type="entry name" value="RING/U-box"/>
    <property type="match status" value="1"/>
</dbReference>
<dbReference type="PROSITE" id="PS50188">
    <property type="entry name" value="B302_SPRY"/>
    <property type="match status" value="1"/>
</dbReference>
<dbReference type="PROSITE" id="PS51262">
    <property type="entry name" value="COS"/>
    <property type="match status" value="1"/>
</dbReference>
<dbReference type="PROSITE" id="PS50853">
    <property type="entry name" value="FN3"/>
    <property type="match status" value="1"/>
</dbReference>
<dbReference type="PROSITE" id="PS50119">
    <property type="entry name" value="ZF_BBOX"/>
    <property type="match status" value="2"/>
</dbReference>
<dbReference type="PROSITE" id="PS00518">
    <property type="entry name" value="ZF_RING_1"/>
    <property type="match status" value="1"/>
</dbReference>
<dbReference type="PROSITE" id="PS50089">
    <property type="entry name" value="ZF_RING_2"/>
    <property type="match status" value="1"/>
</dbReference>
<gene>
    <name type="primary">TRIM9</name>
    <name type="synonym">KIAA0282</name>
    <name type="synonym">RNF91</name>
</gene>
<evidence type="ECO:0000250" key="1">
    <source>
        <dbReference type="UniProtKB" id="Q8C7M3"/>
    </source>
</evidence>
<evidence type="ECO:0000250" key="2">
    <source>
        <dbReference type="UniProtKB" id="Q91ZY8"/>
    </source>
</evidence>
<evidence type="ECO:0000255" key="3"/>
<evidence type="ECO:0000255" key="4">
    <source>
        <dbReference type="PROSITE-ProRule" id="PRU00024"/>
    </source>
</evidence>
<evidence type="ECO:0000255" key="5">
    <source>
        <dbReference type="PROSITE-ProRule" id="PRU00175"/>
    </source>
</evidence>
<evidence type="ECO:0000255" key="6">
    <source>
        <dbReference type="PROSITE-ProRule" id="PRU00316"/>
    </source>
</evidence>
<evidence type="ECO:0000255" key="7">
    <source>
        <dbReference type="PROSITE-ProRule" id="PRU00548"/>
    </source>
</evidence>
<evidence type="ECO:0000255" key="8">
    <source>
        <dbReference type="PROSITE-ProRule" id="PRU00586"/>
    </source>
</evidence>
<evidence type="ECO:0000269" key="9">
    <source>
    </source>
</evidence>
<evidence type="ECO:0000269" key="10">
    <source>
    </source>
</evidence>
<evidence type="ECO:0000269" key="11">
    <source>
    </source>
</evidence>
<evidence type="ECO:0000269" key="12">
    <source>
    </source>
</evidence>
<evidence type="ECO:0000303" key="13">
    <source>
    </source>
</evidence>
<evidence type="ECO:0000303" key="14">
    <source>
    </source>
</evidence>
<evidence type="ECO:0000305" key="15"/>
<evidence type="ECO:0007829" key="16">
    <source>
        <dbReference type="PDB" id="2DB8"/>
    </source>
</evidence>
<evidence type="ECO:0007829" key="17">
    <source>
        <dbReference type="PDB" id="7B2S"/>
    </source>
</evidence>
<organism>
    <name type="scientific">Homo sapiens</name>
    <name type="common">Human</name>
    <dbReference type="NCBI Taxonomy" id="9606"/>
    <lineage>
        <taxon>Eukaryota</taxon>
        <taxon>Metazoa</taxon>
        <taxon>Chordata</taxon>
        <taxon>Craniata</taxon>
        <taxon>Vertebrata</taxon>
        <taxon>Euteleostomi</taxon>
        <taxon>Mammalia</taxon>
        <taxon>Eutheria</taxon>
        <taxon>Euarchontoglires</taxon>
        <taxon>Primates</taxon>
        <taxon>Haplorrhini</taxon>
        <taxon>Catarrhini</taxon>
        <taxon>Hominidae</taxon>
        <taxon>Homo</taxon>
    </lineage>
</organism>
<keyword id="KW-0002">3D-structure</keyword>
<keyword id="KW-0025">Alternative splicing</keyword>
<keyword id="KW-0966">Cell projection</keyword>
<keyword id="KW-0175">Coiled coil</keyword>
<keyword id="KW-0963">Cytoplasm</keyword>
<keyword id="KW-0968">Cytoplasmic vesicle</keyword>
<keyword id="KW-0206">Cytoskeleton</keyword>
<keyword id="KW-0479">Metal-binding</keyword>
<keyword id="KW-0597">Phosphoprotein</keyword>
<keyword id="KW-1267">Proteomics identification</keyword>
<keyword id="KW-1185">Reference proteome</keyword>
<keyword id="KW-0677">Repeat</keyword>
<keyword id="KW-0770">Synapse</keyword>
<keyword id="KW-0808">Transferase</keyword>
<keyword id="KW-0832">Ubl conjugation</keyword>
<keyword id="KW-0833">Ubl conjugation pathway</keyword>
<keyword id="KW-0862">Zinc</keyword>
<keyword id="KW-0863">Zinc-finger</keyword>
<comment type="function">
    <text evidence="11">E3 ubiquitin-protein ligase which ubiquitinates itself in cooperation with an E2 enzyme UBE2D2/UBC4 and serves as a targeting signal for proteasomal degradation. May play a role in regulation of neuronal functions and may also participate in the formation or breakdown of abnormal inclusions in neurodegenerative disorders. May act as a regulator of synaptic vesicle exocytosis by controlling the availability of SNAP25 for the SNARE complex formation.</text>
</comment>
<comment type="catalytic activity">
    <reaction evidence="11">
        <text>S-ubiquitinyl-[E2 ubiquitin-conjugating enzyme]-L-cysteine + [acceptor protein]-L-lysine = [E2 ubiquitin-conjugating enzyme]-L-cysteine + N(6)-ubiquitinyl-[acceptor protein]-L-lysine.</text>
        <dbReference type="EC" id="2.3.2.27"/>
    </reaction>
</comment>
<comment type="pathway">
    <text evidence="11">Protein modification; protein ubiquitination.</text>
</comment>
<comment type="subunit">
    <text evidence="2">Interacts with SNAP25.</text>
</comment>
<comment type="interaction">
    <interactant intactId="EBI-720828">
        <id>Q9C026</id>
    </interactant>
    <interactant intactId="EBI-2371151">
        <id>Q9Y2T2</id>
        <label>AP3M1</label>
    </interactant>
    <organismsDiffer>false</organismsDiffer>
    <experiments>3</experiments>
</comment>
<comment type="interaction">
    <interactant intactId="EBI-720828">
        <id>Q9C026</id>
    </interactant>
    <interactant intactId="EBI-77613">
        <id>P05067</id>
        <label>APP</label>
    </interactant>
    <organismsDiffer>false</organismsDiffer>
    <experiments>3</experiments>
</comment>
<comment type="interaction">
    <interactant intactId="EBI-720828">
        <id>Q9C026</id>
    </interactant>
    <interactant intactId="EBI-930964">
        <id>P54253</id>
        <label>ATXN1</label>
    </interactant>
    <organismsDiffer>false</organismsDiffer>
    <experiments>6</experiments>
</comment>
<comment type="interaction">
    <interactant intactId="EBI-720828">
        <id>Q9C026</id>
    </interactant>
    <interactant intactId="EBI-16429269">
        <id>B7Z3H4</id>
        <label>BTRC</label>
    </interactant>
    <organismsDiffer>false</organismsDiffer>
    <experiments>3</experiments>
</comment>
<comment type="interaction">
    <interactant intactId="EBI-720828">
        <id>Q9C026</id>
    </interactant>
    <interactant intactId="EBI-307461">
        <id>Q9Y297</id>
        <label>BTRC</label>
    </interactant>
    <organismsDiffer>false</organismsDiffer>
    <experiments>8</experiments>
</comment>
<comment type="interaction">
    <interactant intactId="EBI-720828">
        <id>Q9C026</id>
    </interactant>
    <interactant intactId="EBI-751621">
        <id>P48730</id>
        <label>CSNK1D</label>
    </interactant>
    <organismsDiffer>false</organismsDiffer>
    <experiments>3</experiments>
</comment>
<comment type="interaction">
    <interactant intactId="EBI-720828">
        <id>Q9C026</id>
    </interactant>
    <interactant intactId="EBI-5453285">
        <id>Q2TBE0</id>
        <label>CWF19L2</label>
    </interactant>
    <organismsDiffer>false</organismsDiffer>
    <experiments>6</experiments>
</comment>
<comment type="interaction">
    <interactant intactId="EBI-720828">
        <id>Q9C026</id>
    </interactant>
    <interactant intactId="EBI-346653">
        <id>Q9UI08</id>
        <label>EVL</label>
    </interactant>
    <organismsDiffer>false</organismsDiffer>
    <experiments>3</experiments>
</comment>
<comment type="interaction">
    <interactant intactId="EBI-720828">
        <id>Q9C026</id>
    </interactant>
    <interactant intactId="EBI-6448852">
        <id>Q9UI08-2</id>
        <label>EVL</label>
    </interactant>
    <organismsDiffer>false</organismsDiffer>
    <experiments>3</experiments>
</comment>
<comment type="interaction">
    <interactant intactId="EBI-720828">
        <id>Q9C026</id>
    </interactant>
    <interactant intactId="EBI-11986315">
        <id>Q9H5Z6-2</id>
        <label>FAM124B</label>
    </interactant>
    <organismsDiffer>false</organismsDiffer>
    <experiments>3</experiments>
</comment>
<comment type="interaction">
    <interactant intactId="EBI-720828">
        <id>Q9C026</id>
    </interactant>
    <interactant intactId="EBI-6658203">
        <id>Q86YD7</id>
        <label>FAM90A1</label>
    </interactant>
    <organismsDiffer>false</organismsDiffer>
    <experiments>3</experiments>
</comment>
<comment type="interaction">
    <interactant intactId="EBI-720828">
        <id>Q9C026</id>
    </interactant>
    <interactant intactId="EBI-2371750">
        <id>Q969S9</id>
        <label>GFM2</label>
    </interactant>
    <organismsDiffer>false</organismsDiffer>
    <experiments>3</experiments>
</comment>
<comment type="interaction">
    <interactant intactId="EBI-720828">
        <id>Q9C026</id>
    </interactant>
    <interactant intactId="EBI-10975473">
        <id>O60333-2</id>
        <label>KIF1B</label>
    </interactant>
    <organismsDiffer>false</organismsDiffer>
    <experiments>3</experiments>
</comment>
<comment type="interaction">
    <interactant intactId="EBI-720828">
        <id>Q9C026</id>
    </interactant>
    <interactant intactId="EBI-744120">
        <id>Q969V5</id>
        <label>MUL1</label>
    </interactant>
    <organismsDiffer>false</organismsDiffer>
    <experiments>3</experiments>
</comment>
<comment type="interaction">
    <interactant intactId="EBI-720828">
        <id>Q9C026</id>
    </interactant>
    <interactant intactId="EBI-10271199">
        <id>Q8NI38</id>
        <label>NFKBID</label>
    </interactant>
    <organismsDiffer>false</organismsDiffer>
    <experiments>3</experiments>
</comment>
<comment type="interaction">
    <interactant intactId="EBI-720828">
        <id>Q9C026</id>
    </interactant>
    <interactant intactId="EBI-741158">
        <id>Q96HA8</id>
        <label>NTAQ1</label>
    </interactant>
    <organismsDiffer>false</organismsDiffer>
    <experiments>3</experiments>
</comment>
<comment type="interaction">
    <interactant intactId="EBI-720828">
        <id>Q9C026</id>
    </interactant>
    <interactant intactId="EBI-742688">
        <id>Q9NZD8</id>
        <label>SPG21</label>
    </interactant>
    <organismsDiffer>false</organismsDiffer>
    <experiments>6</experiments>
</comment>
<comment type="interaction">
    <interactant intactId="EBI-720828">
        <id>Q9C026</id>
    </interactant>
    <interactant intactId="EBI-372899">
        <id>Q13148</id>
        <label>TARDBP</label>
    </interactant>
    <organismsDiffer>false</organismsDiffer>
    <experiments>6</experiments>
</comment>
<comment type="interaction">
    <interactant intactId="EBI-720828">
        <id>Q9C026</id>
    </interactant>
    <interactant intactId="EBI-3918381">
        <id>Q96PN8</id>
        <label>TSSK3</label>
    </interactant>
    <organismsDiffer>false</organismsDiffer>
    <experiments>3</experiments>
</comment>
<comment type="interaction">
    <interactant intactId="EBI-720828">
        <id>Q9C026</id>
    </interactant>
    <interactant intactId="EBI-747711">
        <id>Q68CQ4</id>
        <label>UTP25</label>
    </interactant>
    <organismsDiffer>false</organismsDiffer>
    <experiments>3</experiments>
</comment>
<comment type="interaction">
    <interactant intactId="EBI-720828">
        <id>Q9C026</id>
    </interactant>
    <interactant intactId="EBI-748201">
        <id>P50552</id>
        <label>VASP</label>
    </interactant>
    <organismsDiffer>false</organismsDiffer>
    <experiments>4</experiments>
</comment>
<comment type="interaction">
    <interactant intactId="EBI-720828">
        <id>Q9C026</id>
    </interactant>
    <interactant intactId="EBI-356498">
        <id>P62258</id>
        <label>YWHAE</label>
    </interactant>
    <organismsDiffer>false</organismsDiffer>
    <experiments>2</experiments>
</comment>
<comment type="interaction">
    <interactant intactId="EBI-16437499">
        <id>Q9C026-5</id>
    </interactant>
    <interactant intactId="EBI-16429247">
        <id>A0A0S2Z507</id>
        <label>BTRC</label>
    </interactant>
    <organismsDiffer>false</organismsDiffer>
    <experiments>3</experiments>
</comment>
<comment type="interaction">
    <interactant intactId="EBI-16437499">
        <id>Q9C026-5</id>
    </interactant>
    <interactant intactId="EBI-16429269">
        <id>B7Z3H4</id>
        <label>BTRC</label>
    </interactant>
    <organismsDiffer>false</organismsDiffer>
    <experiments>3</experiments>
</comment>
<comment type="interaction">
    <interactant intactId="EBI-16437499">
        <id>Q9C026-5</id>
    </interactant>
    <interactant intactId="EBI-307461">
        <id>Q9Y297</id>
        <label>BTRC</label>
    </interactant>
    <organismsDiffer>false</organismsDiffer>
    <experiments>4</experiments>
</comment>
<comment type="subcellular location">
    <subcellularLocation>
        <location evidence="11">Cytoplasm</location>
    </subcellularLocation>
    <subcellularLocation>
        <location evidence="11">Cell projection</location>
        <location evidence="11">Dendrite</location>
    </subcellularLocation>
    <subcellularLocation>
        <location evidence="2">Cytoplasmic vesicle</location>
        <location evidence="2">Secretory vesicle</location>
        <location evidence="2">Synaptic vesicle</location>
    </subcellularLocation>
    <subcellularLocation>
        <location evidence="2">Synapse</location>
    </subcellularLocation>
    <subcellularLocation>
        <location evidence="2">Cytoplasm</location>
        <location evidence="2">Cytoskeleton</location>
    </subcellularLocation>
    <text evidence="2 11">Enriched at synaptic terminals where it exists in a soluble form and a synaptic vesicle-associated form. Associated with the cytoskeleton (By similarity). Found in proximal dendrites of pyramidal neurons in the cerebral cortex and hippocampus, and Purkinje cells in the cerebellum (PubMed:20085810).</text>
</comment>
<comment type="alternative products">
    <event type="alternative splicing"/>
    <isoform>
        <id>Q9C026-1</id>
        <name>1</name>
        <name>Beta</name>
        <sequence type="displayed"/>
    </isoform>
    <isoform>
        <id>Q9C026-4</id>
        <name>4</name>
        <sequence type="described" ref="VSP_007922 VSP_007923 VSP_007924"/>
    </isoform>
    <isoform>
        <id>Q9C026-5</id>
        <name>5</name>
        <sequence type="described" ref="VSP_007925 VSP_007926"/>
    </isoform>
</comment>
<comment type="tissue specificity">
    <text evidence="11">Brain. Highly expressed in the cerebral cortex (at protein level). Severely decreased in the affected brain areas in Parkinson disease and dementia with Lewy bodies.</text>
</comment>
<comment type="domain">
    <text evidence="2">The coiled coil domain mediates the interaction with the N-terminal t-SNARE domain of SNAP25.</text>
</comment>
<comment type="PTM">
    <text evidence="11">Auto-ubiquitinated. Poly-ubiquitinated in cultured cells, whereas it is monoubiquitinated in vitro.</text>
</comment>
<comment type="miscellaneous">
    <molecule>Isoform 4</molecule>
    <text evidence="15">May be due to a competing donor splice site, to exon inclusion and to intron retention.</text>
</comment>
<comment type="miscellaneous">
    <molecule>Isoform 5</molecule>
    <text evidence="15">May be due to intron retention.</text>
</comment>
<comment type="similarity">
    <text evidence="15">Belongs to the TRIM/RBCC family.</text>
</comment>
<comment type="sequence caution" evidence="15">
    <conflict type="frameshift">
        <sequence resource="EMBL-CDS" id="AAG53490"/>
    </conflict>
</comment>
<comment type="sequence caution" evidence="15">
    <conflict type="frameshift">
        <sequence resource="EMBL-CDS" id="AAG53492"/>
    </conflict>
</comment>
<comment type="sequence caution" evidence="15">
    <conflict type="erroneous initiation">
        <sequence resource="EMBL-CDS" id="BAA13398"/>
    </conflict>
    <text>Extended N-terminus.</text>
</comment>
<comment type="sequence caution" evidence="15">
    <conflict type="frameshift">
        <sequence resource="EMBL-CDS" id="BAA13398"/>
    </conflict>
</comment>
<proteinExistence type="evidence at protein level"/>
<accession>Q9C026</accession>
<accession>D3DSB7</accession>
<accession>D3DSB8</accession>
<accession>Q92557</accession>
<accession>Q96D24</accession>
<accession>Q96NI4</accession>
<accession>Q9C025</accession>
<accession>Q9C027</accession>
<reference key="1">
    <citation type="journal article" date="2001" name="EMBO J.">
        <title>The tripartite motif family identifies cell compartments.</title>
        <authorList>
            <person name="Reymond A."/>
            <person name="Meroni G."/>
            <person name="Fantozzi A."/>
            <person name="Merla G."/>
            <person name="Cairo S."/>
            <person name="Luzi L."/>
            <person name="Riganelli D."/>
            <person name="Zanaria E."/>
            <person name="Messali S."/>
            <person name="Cainarca S."/>
            <person name="Guffanti A."/>
            <person name="Minucci S."/>
            <person name="Pelicci P.G."/>
            <person name="Ballabio A."/>
        </authorList>
    </citation>
    <scope>NUCLEOTIDE SEQUENCE [MRNA] (ISOFORM 1)</scope>
    <scope>VARIANT PHE-653</scope>
</reference>
<reference key="2">
    <citation type="journal article" date="1997" name="DNA Res.">
        <title>Construction and characterization of human brain cDNA libraries suitable for analysis of cDNA clones encoding relatively large proteins.</title>
        <authorList>
            <person name="Ohara O."/>
            <person name="Nagase T."/>
            <person name="Ishikawa K."/>
            <person name="Nakajima D."/>
            <person name="Ohira M."/>
            <person name="Seki N."/>
            <person name="Nomura N."/>
        </authorList>
    </citation>
    <scope>NUCLEOTIDE SEQUENCE [LARGE SCALE MRNA] (ISOFORM 1)</scope>
    <scope>VARIANT PHE-653</scope>
    <source>
        <tissue>Brain</tissue>
    </source>
</reference>
<reference key="3">
    <citation type="journal article" date="2002" name="DNA Res.">
        <title>Construction of expression-ready cDNA clones for KIAA genes: manual curation of 330 KIAA cDNA clones.</title>
        <authorList>
            <person name="Nakajima D."/>
            <person name="Okazaki N."/>
            <person name="Yamakawa H."/>
            <person name="Kikuno R."/>
            <person name="Ohara O."/>
            <person name="Nagase T."/>
        </authorList>
    </citation>
    <scope>SEQUENCE REVISION</scope>
</reference>
<reference key="4">
    <citation type="journal article" date="2004" name="Nat. Genet.">
        <title>Complete sequencing and characterization of 21,243 full-length human cDNAs.</title>
        <authorList>
            <person name="Ota T."/>
            <person name="Suzuki Y."/>
            <person name="Nishikawa T."/>
            <person name="Otsuki T."/>
            <person name="Sugiyama T."/>
            <person name="Irie R."/>
            <person name="Wakamatsu A."/>
            <person name="Hayashi K."/>
            <person name="Sato H."/>
            <person name="Nagai K."/>
            <person name="Kimura K."/>
            <person name="Makita H."/>
            <person name="Sekine M."/>
            <person name="Obayashi M."/>
            <person name="Nishi T."/>
            <person name="Shibahara T."/>
            <person name="Tanaka T."/>
            <person name="Ishii S."/>
            <person name="Yamamoto J."/>
            <person name="Saito K."/>
            <person name="Kawai Y."/>
            <person name="Isono Y."/>
            <person name="Nakamura Y."/>
            <person name="Nagahari K."/>
            <person name="Murakami K."/>
            <person name="Yasuda T."/>
            <person name="Iwayanagi T."/>
            <person name="Wagatsuma M."/>
            <person name="Shiratori A."/>
            <person name="Sudo H."/>
            <person name="Hosoiri T."/>
            <person name="Kaku Y."/>
            <person name="Kodaira H."/>
            <person name="Kondo H."/>
            <person name="Sugawara M."/>
            <person name="Takahashi M."/>
            <person name="Kanda K."/>
            <person name="Yokoi T."/>
            <person name="Furuya T."/>
            <person name="Kikkawa E."/>
            <person name="Omura Y."/>
            <person name="Abe K."/>
            <person name="Kamihara K."/>
            <person name="Katsuta N."/>
            <person name="Sato K."/>
            <person name="Tanikawa M."/>
            <person name="Yamazaki M."/>
            <person name="Ninomiya K."/>
            <person name="Ishibashi T."/>
            <person name="Yamashita H."/>
            <person name="Murakawa K."/>
            <person name="Fujimori K."/>
            <person name="Tanai H."/>
            <person name="Kimata M."/>
            <person name="Watanabe M."/>
            <person name="Hiraoka S."/>
            <person name="Chiba Y."/>
            <person name="Ishida S."/>
            <person name="Ono Y."/>
            <person name="Takiguchi S."/>
            <person name="Watanabe S."/>
            <person name="Yosida M."/>
            <person name="Hotuta T."/>
            <person name="Kusano J."/>
            <person name="Kanehori K."/>
            <person name="Takahashi-Fujii A."/>
            <person name="Hara H."/>
            <person name="Tanase T.-O."/>
            <person name="Nomura Y."/>
            <person name="Togiya S."/>
            <person name="Komai F."/>
            <person name="Hara R."/>
            <person name="Takeuchi K."/>
            <person name="Arita M."/>
            <person name="Imose N."/>
            <person name="Musashino K."/>
            <person name="Yuuki H."/>
            <person name="Oshima A."/>
            <person name="Sasaki N."/>
            <person name="Aotsuka S."/>
            <person name="Yoshikawa Y."/>
            <person name="Matsunawa H."/>
            <person name="Ichihara T."/>
            <person name="Shiohata N."/>
            <person name="Sano S."/>
            <person name="Moriya S."/>
            <person name="Momiyama H."/>
            <person name="Satoh N."/>
            <person name="Takami S."/>
            <person name="Terashima Y."/>
            <person name="Suzuki O."/>
            <person name="Nakagawa S."/>
            <person name="Senoh A."/>
            <person name="Mizoguchi H."/>
            <person name="Goto Y."/>
            <person name="Shimizu F."/>
            <person name="Wakebe H."/>
            <person name="Hishigaki H."/>
            <person name="Watanabe T."/>
            <person name="Sugiyama A."/>
            <person name="Takemoto M."/>
            <person name="Kawakami B."/>
            <person name="Yamazaki M."/>
            <person name="Watanabe K."/>
            <person name="Kumagai A."/>
            <person name="Itakura S."/>
            <person name="Fukuzumi Y."/>
            <person name="Fujimori Y."/>
            <person name="Komiyama M."/>
            <person name="Tashiro H."/>
            <person name="Tanigami A."/>
            <person name="Fujiwara T."/>
            <person name="Ono T."/>
            <person name="Yamada K."/>
            <person name="Fujii Y."/>
            <person name="Ozaki K."/>
            <person name="Hirao M."/>
            <person name="Ohmori Y."/>
            <person name="Kawabata A."/>
            <person name="Hikiji T."/>
            <person name="Kobatake N."/>
            <person name="Inagaki H."/>
            <person name="Ikema Y."/>
            <person name="Okamoto S."/>
            <person name="Okitani R."/>
            <person name="Kawakami T."/>
            <person name="Noguchi S."/>
            <person name="Itoh T."/>
            <person name="Shigeta K."/>
            <person name="Senba T."/>
            <person name="Matsumura K."/>
            <person name="Nakajima Y."/>
            <person name="Mizuno T."/>
            <person name="Morinaga M."/>
            <person name="Sasaki M."/>
            <person name="Togashi T."/>
            <person name="Oyama M."/>
            <person name="Hata H."/>
            <person name="Watanabe M."/>
            <person name="Komatsu T."/>
            <person name="Mizushima-Sugano J."/>
            <person name="Satoh T."/>
            <person name="Shirai Y."/>
            <person name="Takahashi Y."/>
            <person name="Nakagawa K."/>
            <person name="Okumura K."/>
            <person name="Nagase T."/>
            <person name="Nomura N."/>
            <person name="Kikuchi H."/>
            <person name="Masuho Y."/>
            <person name="Yamashita R."/>
            <person name="Nakai K."/>
            <person name="Yada T."/>
            <person name="Nakamura Y."/>
            <person name="Ohara O."/>
            <person name="Isogai T."/>
            <person name="Sugano S."/>
        </authorList>
    </citation>
    <scope>NUCLEOTIDE SEQUENCE [LARGE SCALE MRNA] (ISOFORM 4)</scope>
    <source>
        <tissue>Fetal brain</tissue>
    </source>
</reference>
<reference key="5">
    <citation type="submission" date="2005-09" db="EMBL/GenBank/DDBJ databases">
        <authorList>
            <person name="Mural R.J."/>
            <person name="Istrail S."/>
            <person name="Sutton G.G."/>
            <person name="Florea L."/>
            <person name="Halpern A.L."/>
            <person name="Mobarry C.M."/>
            <person name="Lippert R."/>
            <person name="Walenz B."/>
            <person name="Shatkay H."/>
            <person name="Dew I."/>
            <person name="Miller J.R."/>
            <person name="Flanigan M.J."/>
            <person name="Edwards N.J."/>
            <person name="Bolanos R."/>
            <person name="Fasulo D."/>
            <person name="Halldorsson B.V."/>
            <person name="Hannenhalli S."/>
            <person name="Turner R."/>
            <person name="Yooseph S."/>
            <person name="Lu F."/>
            <person name="Nusskern D.R."/>
            <person name="Shue B.C."/>
            <person name="Zheng X.H."/>
            <person name="Zhong F."/>
            <person name="Delcher A.L."/>
            <person name="Huson D.H."/>
            <person name="Kravitz S.A."/>
            <person name="Mouchard L."/>
            <person name="Reinert K."/>
            <person name="Remington K.A."/>
            <person name="Clark A.G."/>
            <person name="Waterman M.S."/>
            <person name="Eichler E.E."/>
            <person name="Adams M.D."/>
            <person name="Hunkapiller M.W."/>
            <person name="Myers E.W."/>
            <person name="Venter J.C."/>
        </authorList>
    </citation>
    <scope>NUCLEOTIDE SEQUENCE [LARGE SCALE GENOMIC DNA]</scope>
</reference>
<reference key="6">
    <citation type="journal article" date="2004" name="Genome Res.">
        <title>The status, quality, and expansion of the NIH full-length cDNA project: the Mammalian Gene Collection (MGC).</title>
        <authorList>
            <consortium name="The MGC Project Team"/>
        </authorList>
    </citation>
    <scope>NUCLEOTIDE SEQUENCE [LARGE SCALE MRNA] (ISOFORMS 1 AND 5)</scope>
    <scope>VARIANT PHE-653</scope>
    <source>
        <tissue>Brain</tissue>
        <tissue>Uterus</tissue>
    </source>
</reference>
<reference key="7">
    <citation type="journal article" date="2010" name="Neurobiol. Dis.">
        <title>TRIM9, a novel brain-specific E3 ubiquitin ligase, is repressed in the brain of Parkinson's disease and dementia with Lewy bodies.</title>
        <authorList>
            <person name="Tanji K."/>
            <person name="Kamitani T."/>
            <person name="Mori F."/>
            <person name="Kakita A."/>
            <person name="Takahashi H."/>
            <person name="Wakabayashi K."/>
        </authorList>
    </citation>
    <scope>FUNCTION</scope>
    <scope>CATALYTIC ACTIVITY</scope>
    <scope>PATHWAY</scope>
    <scope>SUBCELLULAR LOCALIZATION</scope>
    <scope>TISSUE SPECIFICITY</scope>
    <scope>AUTOUBIQUITINATION</scope>
</reference>
<reference key="8">
    <citation type="submission" date="2006-06" db="PDB data bank">
        <title>Solution structures of the FN3 domain of human tripartite motif protein 9.</title>
        <authorList>
            <consortium name="RIKEN structural genomics initiative (RSGI)"/>
        </authorList>
    </citation>
    <scope>STRUCTURE BY NMR OF 437-534</scope>
</reference>
<protein>
    <recommendedName>
        <fullName>E3 ubiquitin-protein ligase TRIM9</fullName>
        <ecNumber evidence="11">2.3.2.27</ecNumber>
    </recommendedName>
    <alternativeName>
        <fullName>RING finger protein 91</fullName>
    </alternativeName>
    <alternativeName>
        <fullName evidence="15">RING-type E3 ubiquitin transferase TRIM9</fullName>
    </alternativeName>
    <alternativeName>
        <fullName>Tripartite motif-containing protein 9</fullName>
    </alternativeName>
</protein>